<sequence length="378" mass="40320">MEPVIIGALILDVHAKPSTTPISGTTVPGQVLFAPGGVARNVADCIFKLGITPFMIGTLGLDGPANVLLKEWKLSMKGILRREDISTPIVSLVYDTNGEVAAGVAGVDAVENFLTPEWIQRFEYNISSARLLMVDANLSSLALEASCKLAAESSVPVWFEPVSVTKSQRIASIAKYVTIVSPNQDELIAMANALCAKNLFHPFRSDENKLSIEDMFRALKPAILVLLKNGVKVVIVTLGSNGALLCSKGNPKKALNIDRKFLRSGEVFKRVQSVCSPNRFSELGSNRSPSLFAMHFPTIPAKVKKLTGAGDCLVGGTVASLSDGLDLIQSLAVGIASAKAAVESDDNVPPEFKLDLISGDAELVYNGAKMLMVHQSML</sequence>
<feature type="chain" id="PRO_0000454667" description="Pseudouridine kinase">
    <location>
        <begin position="1"/>
        <end position="378"/>
    </location>
</feature>
<feature type="binding site" evidence="2 7">
    <location>
        <position position="12"/>
    </location>
    <ligand>
        <name>pseudouridine</name>
        <dbReference type="ChEBI" id="CHEBI:17802"/>
    </ligand>
</feature>
<feature type="binding site" evidence="2 7">
    <location>
        <position position="26"/>
    </location>
    <ligand>
        <name>pseudouridine</name>
        <dbReference type="ChEBI" id="CHEBI:17802"/>
    </ligand>
</feature>
<feature type="binding site" evidence="2 7">
    <location>
        <begin position="37"/>
        <end position="41"/>
    </location>
    <ligand>
        <name>pseudouridine</name>
        <dbReference type="ChEBI" id="CHEBI:17802"/>
    </ligand>
</feature>
<feature type="binding site" evidence="2 7">
    <location>
        <position position="38"/>
    </location>
    <ligand>
        <name>pseudouridine</name>
        <dbReference type="ChEBI" id="CHEBI:17802"/>
    </ligand>
</feature>
<feature type="binding site" evidence="2 7">
    <location>
        <position position="137"/>
    </location>
    <ligand>
        <name>pseudouridine</name>
        <dbReference type="ChEBI" id="CHEBI:17802"/>
    </ligand>
</feature>
<feature type="binding site" evidence="2 7">
    <location>
        <position position="166"/>
    </location>
    <ligand>
        <name>pseudouridine</name>
        <dbReference type="ChEBI" id="CHEBI:17802"/>
    </ligand>
</feature>
<feature type="binding site" evidence="2 8">
    <location>
        <position position="181"/>
    </location>
    <ligand>
        <name>Mg(2+)</name>
        <dbReference type="ChEBI" id="CHEBI:18420"/>
    </ligand>
</feature>
<feature type="binding site" evidence="2 7 8">
    <location>
        <position position="237"/>
    </location>
    <ligand>
        <name>ATP</name>
        <dbReference type="ChEBI" id="CHEBI:30616"/>
    </ligand>
</feature>
<feature type="binding site" evidence="2 8">
    <location>
        <position position="237"/>
    </location>
    <ligand>
        <name>Mg(2+)</name>
        <dbReference type="ChEBI" id="CHEBI:18420"/>
    </ligand>
</feature>
<feature type="binding site" evidence="2 7 8">
    <location>
        <position position="239"/>
    </location>
    <ligand>
        <name>ATP</name>
        <dbReference type="ChEBI" id="CHEBI:30616"/>
    </ligand>
</feature>
<feature type="binding site" evidence="2 7 8">
    <location>
        <position position="242"/>
    </location>
    <ligand>
        <name>ATP</name>
        <dbReference type="ChEBI" id="CHEBI:30616"/>
    </ligand>
</feature>
<feature type="binding site" evidence="2 7 8">
    <location>
        <position position="298"/>
    </location>
    <ligand>
        <name>ATP</name>
        <dbReference type="ChEBI" id="CHEBI:30616"/>
    </ligand>
</feature>
<feature type="binding site" evidence="2 8">
    <location>
        <position position="306"/>
    </location>
    <ligand>
        <name>ATP</name>
        <dbReference type="ChEBI" id="CHEBI:30616"/>
    </ligand>
</feature>
<feature type="binding site" evidence="2 7 8">
    <location>
        <position position="310"/>
    </location>
    <ligand>
        <name>ATP</name>
        <dbReference type="ChEBI" id="CHEBI:30616"/>
    </ligand>
</feature>
<feature type="binding site" evidence="2 7">
    <location>
        <position position="311"/>
    </location>
    <ligand>
        <name>pseudouridine</name>
        <dbReference type="ChEBI" id="CHEBI:17802"/>
    </ligand>
</feature>
<feature type="mutagenesis site" description="Reduces kinase activity 2-fold." evidence="2">
    <original>I</original>
    <variation>A</variation>
    <location>
        <position position="10"/>
    </location>
</feature>
<feature type="mutagenesis site" description="Reduces kinase activity 171-fold." evidence="2">
    <original>D</original>
    <variation>A</variation>
    <location>
        <position position="12"/>
    </location>
</feature>
<feature type="mutagenesis site" description="Reduces kinase activity 66-fold." evidence="2">
    <original>D</original>
    <variation>N</variation>
    <location>
        <position position="12"/>
    </location>
</feature>
<feature type="mutagenesis site" description="Reduces kinase activity 8-fold." evidence="2">
    <original>T</original>
    <variation>A</variation>
    <location>
        <position position="26"/>
    </location>
</feature>
<feature type="mutagenesis site" description="Reduces kinase activity 2-fold." evidence="2">
    <original>T</original>
    <variation>S</variation>
    <location>
        <position position="26"/>
    </location>
</feature>
<feature type="mutagenesis site" description="Reduces kinase activity 13-fold." evidence="2">
    <original>T</original>
    <variation>V</variation>
    <location>
        <position position="26"/>
    </location>
</feature>
<feature type="mutagenesis site" description="Reduces kinase activity 39-fold." evidence="2">
    <original>N</original>
    <variation>A</variation>
    <location>
        <position position="137"/>
    </location>
</feature>
<feature type="mutagenesis site" description="Reduces kinase activity 214-fold." evidence="2">
    <original>E</original>
    <variation>A</variation>
    <location>
        <position position="160"/>
    </location>
</feature>
<feature type="mutagenesis site" description="Reduces kinase activity 50-fold." evidence="2">
    <original>E</original>
    <variation>Q</variation>
    <location>
        <position position="160"/>
    </location>
</feature>
<feature type="mutagenesis site" description="Reduces kinase activity 6-fold." evidence="2">
    <original>K</original>
    <variation>A</variation>
    <location>
        <position position="166"/>
    </location>
</feature>
<feature type="mutagenesis site" description="Reduces kinase activity 2-fold." evidence="2">
    <original>T</original>
    <variation>A</variation>
    <location>
        <position position="298"/>
    </location>
</feature>
<feature type="mutagenesis site" description="No effect on kinase activity." evidence="2">
    <original>T</original>
    <variation>V</variation>
    <location>
        <position position="298"/>
    </location>
</feature>
<feature type="mutagenesis site" description="Reduces kinase activity 3-fold." evidence="2">
    <original>V</original>
    <variation>A</variation>
    <location>
        <position position="303"/>
    </location>
</feature>
<feature type="mutagenesis site" description="Reduces kinase activity 4-fold." evidence="2">
    <original>L</original>
    <variation>A</variation>
    <location>
        <position position="306"/>
    </location>
</feature>
<feature type="mutagenesis site" description="Reduces kinase activity 171-fold." evidence="2">
    <original>D</original>
    <variation>A</variation>
    <location>
        <position position="311"/>
    </location>
</feature>
<feature type="mutagenesis site" description="Reduces kinase activity 5-fold." evidence="2">
    <original>V</original>
    <variation>A</variation>
    <location>
        <position position="342"/>
    </location>
</feature>
<feature type="sequence conflict" description="In Ref. 4; AAM61339." evidence="4" ref="4">
    <original>R</original>
    <variation>P</variation>
    <location>
        <position position="130"/>
    </location>
</feature>
<feature type="sequence conflict" description="In Ref. 4; AAM61339." evidence="4" ref="4">
    <location>
        <begin position="288"/>
        <end position="289"/>
    </location>
</feature>
<feature type="sequence conflict" description="In Ref. 4; AAM61339." evidence="4" ref="4">
    <original>N</original>
    <variation>H</variation>
    <location>
        <position position="366"/>
    </location>
</feature>
<feature type="strand" evidence="9">
    <location>
        <begin position="4"/>
        <end position="7"/>
    </location>
</feature>
<feature type="strand" evidence="9">
    <location>
        <begin position="10"/>
        <end position="19"/>
    </location>
</feature>
<feature type="strand" evidence="9">
    <location>
        <begin position="25"/>
        <end position="36"/>
    </location>
</feature>
<feature type="helix" evidence="9">
    <location>
        <begin position="38"/>
        <end position="48"/>
    </location>
</feature>
<feature type="strand" evidence="9">
    <location>
        <begin position="54"/>
        <end position="62"/>
    </location>
</feature>
<feature type="helix" evidence="9">
    <location>
        <begin position="63"/>
        <end position="69"/>
    </location>
</feature>
<feature type="strand" evidence="9">
    <location>
        <begin position="79"/>
        <end position="82"/>
    </location>
</feature>
<feature type="strand" evidence="9">
    <location>
        <begin position="89"/>
        <end position="94"/>
    </location>
</feature>
<feature type="strand" evidence="9">
    <location>
        <begin position="98"/>
        <end position="106"/>
    </location>
</feature>
<feature type="helix" evidence="9">
    <location>
        <begin position="108"/>
        <end position="113"/>
    </location>
</feature>
<feature type="helix" evidence="9">
    <location>
        <begin position="116"/>
        <end position="120"/>
    </location>
</feature>
<feature type="helix" evidence="9">
    <location>
        <begin position="123"/>
        <end position="127"/>
    </location>
</feature>
<feature type="strand" evidence="9">
    <location>
        <begin position="132"/>
        <end position="135"/>
    </location>
</feature>
<feature type="helix" evidence="9">
    <location>
        <begin position="140"/>
        <end position="152"/>
    </location>
</feature>
<feature type="strand" evidence="9">
    <location>
        <begin position="157"/>
        <end position="160"/>
    </location>
</feature>
<feature type="helix" evidence="9">
    <location>
        <begin position="166"/>
        <end position="172"/>
    </location>
</feature>
<feature type="helix" evidence="9">
    <location>
        <begin position="174"/>
        <end position="176"/>
    </location>
</feature>
<feature type="strand" evidence="9">
    <location>
        <begin position="178"/>
        <end position="180"/>
    </location>
</feature>
<feature type="helix" evidence="9">
    <location>
        <begin position="184"/>
        <end position="195"/>
    </location>
</feature>
<feature type="helix" evidence="9">
    <location>
        <begin position="212"/>
        <end position="228"/>
    </location>
</feature>
<feature type="strand" evidence="9">
    <location>
        <begin position="233"/>
        <end position="237"/>
    </location>
</feature>
<feature type="helix" evidence="9">
    <location>
        <begin position="239"/>
        <end position="241"/>
    </location>
</feature>
<feature type="strand" evidence="9">
    <location>
        <begin position="243"/>
        <end position="249"/>
    </location>
</feature>
<feature type="helix" evidence="9">
    <location>
        <begin position="251"/>
        <end position="253"/>
    </location>
</feature>
<feature type="helix" evidence="9">
    <location>
        <begin position="266"/>
        <end position="274"/>
    </location>
</feature>
<feature type="strand" evidence="9">
    <location>
        <begin position="292"/>
        <end position="296"/>
    </location>
</feature>
<feature type="helix" evidence="9">
    <location>
        <begin position="309"/>
        <end position="322"/>
    </location>
</feature>
<feature type="helix" evidence="9">
    <location>
        <begin position="327"/>
        <end position="342"/>
    </location>
</feature>
<feature type="strand" evidence="9">
    <location>
        <begin position="344"/>
        <end position="348"/>
    </location>
</feature>
<feature type="helix" evidence="9">
    <location>
        <begin position="354"/>
        <end position="367"/>
    </location>
</feature>
<feature type="strand" evidence="9">
    <location>
        <begin position="369"/>
        <end position="371"/>
    </location>
</feature>
<keyword id="KW-0002">3D-structure</keyword>
<keyword id="KW-0067">ATP-binding</keyword>
<keyword id="KW-0418">Kinase</keyword>
<keyword id="KW-0460">Magnesium</keyword>
<keyword id="KW-0479">Metal-binding</keyword>
<keyword id="KW-0547">Nucleotide-binding</keyword>
<keyword id="KW-0576">Peroxisome</keyword>
<keyword id="KW-1185">Reference proteome</keyword>
<keyword id="KW-0808">Transferase</keyword>
<dbReference type="EC" id="2.7.1.83" evidence="1 2"/>
<dbReference type="EMBL" id="AC007504">
    <property type="protein sequence ID" value="AAD43174.1"/>
    <property type="status" value="ALT_SEQ"/>
    <property type="molecule type" value="Genomic_DNA"/>
</dbReference>
<dbReference type="EMBL" id="CP002684">
    <property type="protein sequence ID" value="AEE32421.1"/>
    <property type="molecule type" value="Genomic_DNA"/>
</dbReference>
<dbReference type="EMBL" id="AY045816">
    <property type="protein sequence ID" value="AAK76490.1"/>
    <property type="molecule type" value="mRNA"/>
</dbReference>
<dbReference type="EMBL" id="AY142514">
    <property type="protein sequence ID" value="AAN13115.1"/>
    <property type="molecule type" value="mRNA"/>
</dbReference>
<dbReference type="EMBL" id="AY084771">
    <property type="protein sequence ID" value="AAM61339.1"/>
    <property type="molecule type" value="mRNA"/>
</dbReference>
<dbReference type="PIR" id="G96529">
    <property type="entry name" value="G96529"/>
</dbReference>
<dbReference type="RefSeq" id="NP_564543.1">
    <property type="nucleotide sequence ID" value="NM_103825.6"/>
</dbReference>
<dbReference type="PDB" id="7C1X">
    <property type="method" value="X-ray"/>
    <property type="resolution" value="2.39 A"/>
    <property type="chains" value="A/B=1-378"/>
</dbReference>
<dbReference type="PDB" id="7C1Y">
    <property type="method" value="X-ray"/>
    <property type="resolution" value="2.08 A"/>
    <property type="chains" value="A/B=1-378"/>
</dbReference>
<dbReference type="PDB" id="7C1Z">
    <property type="method" value="X-ray"/>
    <property type="resolution" value="2.10 A"/>
    <property type="chains" value="A/B=1-378"/>
</dbReference>
<dbReference type="PDBsum" id="7C1X"/>
<dbReference type="PDBsum" id="7C1Y"/>
<dbReference type="PDBsum" id="7C1Z"/>
<dbReference type="SMR" id="Q94AT3"/>
<dbReference type="FunCoup" id="Q94AT3">
    <property type="interactions" value="31"/>
</dbReference>
<dbReference type="IntAct" id="Q94AT3">
    <property type="interactions" value="1"/>
</dbReference>
<dbReference type="STRING" id="3702.Q94AT3"/>
<dbReference type="iPTMnet" id="Q94AT3"/>
<dbReference type="PaxDb" id="3702-AT1G49350.1"/>
<dbReference type="ProteomicsDB" id="176749"/>
<dbReference type="EnsemblPlants" id="AT1G49350.1">
    <property type="protein sequence ID" value="AT1G49350.1"/>
    <property type="gene ID" value="AT1G49350"/>
</dbReference>
<dbReference type="GeneID" id="841358"/>
<dbReference type="Gramene" id="AT1G49350.1">
    <property type="protein sequence ID" value="AT1G49350.1"/>
    <property type="gene ID" value="AT1G49350"/>
</dbReference>
<dbReference type="KEGG" id="ath:AT1G49350"/>
<dbReference type="Araport" id="AT1G49350"/>
<dbReference type="TAIR" id="AT1G49350">
    <property type="gene designation" value="PUKI"/>
</dbReference>
<dbReference type="eggNOG" id="KOG3009">
    <property type="taxonomic scope" value="Eukaryota"/>
</dbReference>
<dbReference type="HOGENOM" id="CLU_038991_0_0_1"/>
<dbReference type="InParanoid" id="Q94AT3"/>
<dbReference type="OMA" id="GHIMNLM"/>
<dbReference type="PhylomeDB" id="Q94AT3"/>
<dbReference type="PRO" id="PR:Q94AT3"/>
<dbReference type="Proteomes" id="UP000006548">
    <property type="component" value="Chromosome 1"/>
</dbReference>
<dbReference type="ExpressionAtlas" id="Q94AT3">
    <property type="expression patterns" value="baseline and differential"/>
</dbReference>
<dbReference type="GO" id="GO:0005777">
    <property type="term" value="C:peroxisome"/>
    <property type="evidence" value="ECO:0000314"/>
    <property type="project" value="TAIR"/>
</dbReference>
<dbReference type="GO" id="GO:0005524">
    <property type="term" value="F:ATP binding"/>
    <property type="evidence" value="ECO:0007669"/>
    <property type="project" value="UniProtKB-KW"/>
</dbReference>
<dbReference type="GO" id="GO:0016301">
    <property type="term" value="F:kinase activity"/>
    <property type="evidence" value="ECO:0000314"/>
    <property type="project" value="TAIR"/>
</dbReference>
<dbReference type="GO" id="GO:0046872">
    <property type="term" value="F:metal ion binding"/>
    <property type="evidence" value="ECO:0007669"/>
    <property type="project" value="UniProtKB-KW"/>
</dbReference>
<dbReference type="CDD" id="cd01941">
    <property type="entry name" value="YeiC_kinase_like"/>
    <property type="match status" value="1"/>
</dbReference>
<dbReference type="Gene3D" id="3.40.1190.20">
    <property type="match status" value="1"/>
</dbReference>
<dbReference type="InterPro" id="IPR002173">
    <property type="entry name" value="Carboh/pur_kinase_PfkB_CS"/>
</dbReference>
<dbReference type="InterPro" id="IPR011611">
    <property type="entry name" value="PfkB_dom"/>
</dbReference>
<dbReference type="InterPro" id="IPR002139">
    <property type="entry name" value="Ribo/fructo_kinase"/>
</dbReference>
<dbReference type="InterPro" id="IPR029056">
    <property type="entry name" value="Ribokinase-like"/>
</dbReference>
<dbReference type="PANTHER" id="PTHR42909:SF1">
    <property type="entry name" value="CARBOHYDRATE KINASE PFKB DOMAIN-CONTAINING PROTEIN"/>
    <property type="match status" value="1"/>
</dbReference>
<dbReference type="PANTHER" id="PTHR42909">
    <property type="entry name" value="ZGC:136858"/>
    <property type="match status" value="1"/>
</dbReference>
<dbReference type="Pfam" id="PF00294">
    <property type="entry name" value="PfkB"/>
    <property type="match status" value="2"/>
</dbReference>
<dbReference type="PRINTS" id="PR00990">
    <property type="entry name" value="RIBOKINASE"/>
</dbReference>
<dbReference type="SUPFAM" id="SSF53613">
    <property type="entry name" value="Ribokinase-like"/>
    <property type="match status" value="1"/>
</dbReference>
<dbReference type="PROSITE" id="PS00583">
    <property type="entry name" value="PFKB_KINASES_1"/>
    <property type="match status" value="1"/>
</dbReference>
<comment type="function">
    <text evidence="1">Catalyzes the phosphorylation of pseudouridine to pseudouridine 5'-phosphate (PsiMP) (PubMed:31907295). Catalyzes the first step in a pseudouridine degradation pathway (PubMed:31907295). Acts together with the pseudouridine 5'-phosphate glycosidase PUMY in the peroxisome to prevent toxic pseudouridine monophosphate accumulation (PubMed:31907295).</text>
</comment>
<comment type="catalytic activity">
    <reaction evidence="1 2">
        <text>pseudouridine + ATP = psi-UMP + ADP + H(+)</text>
        <dbReference type="Rhea" id="RHEA:22448"/>
        <dbReference type="ChEBI" id="CHEBI:15378"/>
        <dbReference type="ChEBI" id="CHEBI:17802"/>
        <dbReference type="ChEBI" id="CHEBI:30616"/>
        <dbReference type="ChEBI" id="CHEBI:58380"/>
        <dbReference type="ChEBI" id="CHEBI:456216"/>
        <dbReference type="EC" id="2.7.1.83"/>
    </reaction>
    <physiologicalReaction direction="left-to-right" evidence="1 2">
        <dbReference type="Rhea" id="RHEA:22449"/>
    </physiologicalReaction>
</comment>
<comment type="biophysicochemical properties">
    <kinetics>
        <KM evidence="1">4.4 uM for pseudouridine</KM>
        <KM evidence="2">39.6 uM for pseudouridine</KM>
        <KM evidence="2">762 uM for ATP</KM>
        <text evidence="1 2">kcat is 0.23 sec(-1) with pseudouridine as substrate (PubMed:31907295). kcat is 5.28 sec(-1) with pseudouridine as substrate (PubMed:33290549). kcat is 5.80 sec(-1) with ATP as substrate (PubMed:33290549).</text>
    </kinetics>
</comment>
<comment type="subunit">
    <text evidence="2">Forms homodimers.</text>
</comment>
<comment type="subcellular location">
    <subcellularLocation>
        <location evidence="1">Peroxisome</location>
    </subcellularLocation>
</comment>
<comment type="similarity">
    <text evidence="4">Belongs to the carbohydrate kinase PfkB family.</text>
</comment>
<comment type="sequence caution" evidence="4">
    <conflict type="erroneous gene model prediction">
        <sequence resource="EMBL-CDS" id="AAD43174"/>
    </conflict>
</comment>
<organism>
    <name type="scientific">Arabidopsis thaliana</name>
    <name type="common">Mouse-ear cress</name>
    <dbReference type="NCBI Taxonomy" id="3702"/>
    <lineage>
        <taxon>Eukaryota</taxon>
        <taxon>Viridiplantae</taxon>
        <taxon>Streptophyta</taxon>
        <taxon>Embryophyta</taxon>
        <taxon>Tracheophyta</taxon>
        <taxon>Spermatophyta</taxon>
        <taxon>Magnoliopsida</taxon>
        <taxon>eudicotyledons</taxon>
        <taxon>Gunneridae</taxon>
        <taxon>Pentapetalae</taxon>
        <taxon>rosids</taxon>
        <taxon>malvids</taxon>
        <taxon>Brassicales</taxon>
        <taxon>Brassicaceae</taxon>
        <taxon>Camelineae</taxon>
        <taxon>Arabidopsis</taxon>
    </lineage>
</organism>
<name>PUKI_ARATH</name>
<accession>Q94AT3</accession>
<accession>Q8LFL6</accession>
<accession>Q9XIA1</accession>
<evidence type="ECO:0000269" key="1">
    <source>
    </source>
</evidence>
<evidence type="ECO:0000269" key="2">
    <source>
    </source>
</evidence>
<evidence type="ECO:0000303" key="3">
    <source>
    </source>
</evidence>
<evidence type="ECO:0000305" key="4"/>
<evidence type="ECO:0000312" key="5">
    <source>
        <dbReference type="Araport" id="AT1G49350"/>
    </source>
</evidence>
<evidence type="ECO:0000312" key="6">
    <source>
        <dbReference type="EMBL" id="AAD43174.1"/>
    </source>
</evidence>
<evidence type="ECO:0007744" key="7">
    <source>
        <dbReference type="PDB" id="7C1Y"/>
    </source>
</evidence>
<evidence type="ECO:0007744" key="8">
    <source>
        <dbReference type="PDB" id="7C1Z"/>
    </source>
</evidence>
<evidence type="ECO:0007829" key="9">
    <source>
        <dbReference type="PDB" id="7C1Y"/>
    </source>
</evidence>
<proteinExistence type="evidence at protein level"/>
<reference key="1">
    <citation type="journal article" date="2000" name="Nature">
        <title>Sequence and analysis of chromosome 1 of the plant Arabidopsis thaliana.</title>
        <authorList>
            <person name="Theologis A."/>
            <person name="Ecker J.R."/>
            <person name="Palm C.J."/>
            <person name="Federspiel N.A."/>
            <person name="Kaul S."/>
            <person name="White O."/>
            <person name="Alonso J."/>
            <person name="Altafi H."/>
            <person name="Araujo R."/>
            <person name="Bowman C.L."/>
            <person name="Brooks S.Y."/>
            <person name="Buehler E."/>
            <person name="Chan A."/>
            <person name="Chao Q."/>
            <person name="Chen H."/>
            <person name="Cheuk R.F."/>
            <person name="Chin C.W."/>
            <person name="Chung M.K."/>
            <person name="Conn L."/>
            <person name="Conway A.B."/>
            <person name="Conway A.R."/>
            <person name="Creasy T.H."/>
            <person name="Dewar K."/>
            <person name="Dunn P."/>
            <person name="Etgu P."/>
            <person name="Feldblyum T.V."/>
            <person name="Feng J.-D."/>
            <person name="Fong B."/>
            <person name="Fujii C.Y."/>
            <person name="Gill J.E."/>
            <person name="Goldsmith A.D."/>
            <person name="Haas B."/>
            <person name="Hansen N.F."/>
            <person name="Hughes B."/>
            <person name="Huizar L."/>
            <person name="Hunter J.L."/>
            <person name="Jenkins J."/>
            <person name="Johnson-Hopson C."/>
            <person name="Khan S."/>
            <person name="Khaykin E."/>
            <person name="Kim C.J."/>
            <person name="Koo H.L."/>
            <person name="Kremenetskaia I."/>
            <person name="Kurtz D.B."/>
            <person name="Kwan A."/>
            <person name="Lam B."/>
            <person name="Langin-Hooper S."/>
            <person name="Lee A."/>
            <person name="Lee J.M."/>
            <person name="Lenz C.A."/>
            <person name="Li J.H."/>
            <person name="Li Y.-P."/>
            <person name="Lin X."/>
            <person name="Liu S.X."/>
            <person name="Liu Z.A."/>
            <person name="Luros J.S."/>
            <person name="Maiti R."/>
            <person name="Marziali A."/>
            <person name="Militscher J."/>
            <person name="Miranda M."/>
            <person name="Nguyen M."/>
            <person name="Nierman W.C."/>
            <person name="Osborne B.I."/>
            <person name="Pai G."/>
            <person name="Peterson J."/>
            <person name="Pham P.K."/>
            <person name="Rizzo M."/>
            <person name="Rooney T."/>
            <person name="Rowley D."/>
            <person name="Sakano H."/>
            <person name="Salzberg S.L."/>
            <person name="Schwartz J.R."/>
            <person name="Shinn P."/>
            <person name="Southwick A.M."/>
            <person name="Sun H."/>
            <person name="Tallon L.J."/>
            <person name="Tambunga G."/>
            <person name="Toriumi M.J."/>
            <person name="Town C.D."/>
            <person name="Utterback T."/>
            <person name="Van Aken S."/>
            <person name="Vaysberg M."/>
            <person name="Vysotskaia V.S."/>
            <person name="Walker M."/>
            <person name="Wu D."/>
            <person name="Yu G."/>
            <person name="Fraser C.M."/>
            <person name="Venter J.C."/>
            <person name="Davis R.W."/>
        </authorList>
    </citation>
    <scope>NUCLEOTIDE SEQUENCE [LARGE SCALE GENOMIC DNA]</scope>
    <source>
        <strain>cv. Columbia</strain>
    </source>
</reference>
<reference key="2">
    <citation type="journal article" date="2017" name="Plant J.">
        <title>Araport11: a complete reannotation of the Arabidopsis thaliana reference genome.</title>
        <authorList>
            <person name="Cheng C.Y."/>
            <person name="Krishnakumar V."/>
            <person name="Chan A.P."/>
            <person name="Thibaud-Nissen F."/>
            <person name="Schobel S."/>
            <person name="Town C.D."/>
        </authorList>
    </citation>
    <scope>GENOME REANNOTATION</scope>
    <source>
        <strain>cv. Columbia</strain>
    </source>
</reference>
<reference key="3">
    <citation type="journal article" date="2003" name="Science">
        <title>Empirical analysis of transcriptional activity in the Arabidopsis genome.</title>
        <authorList>
            <person name="Yamada K."/>
            <person name="Lim J."/>
            <person name="Dale J.M."/>
            <person name="Chen H."/>
            <person name="Shinn P."/>
            <person name="Palm C.J."/>
            <person name="Southwick A.M."/>
            <person name="Wu H.C."/>
            <person name="Kim C.J."/>
            <person name="Nguyen M."/>
            <person name="Pham P.K."/>
            <person name="Cheuk R.F."/>
            <person name="Karlin-Newmann G."/>
            <person name="Liu S.X."/>
            <person name="Lam B."/>
            <person name="Sakano H."/>
            <person name="Wu T."/>
            <person name="Yu G."/>
            <person name="Miranda M."/>
            <person name="Quach H.L."/>
            <person name="Tripp M."/>
            <person name="Chang C.H."/>
            <person name="Lee J.M."/>
            <person name="Toriumi M.J."/>
            <person name="Chan M.M."/>
            <person name="Tang C.C."/>
            <person name="Onodera C.S."/>
            <person name="Deng J.M."/>
            <person name="Akiyama K."/>
            <person name="Ansari Y."/>
            <person name="Arakawa T."/>
            <person name="Banh J."/>
            <person name="Banno F."/>
            <person name="Bowser L."/>
            <person name="Brooks S.Y."/>
            <person name="Carninci P."/>
            <person name="Chao Q."/>
            <person name="Choy N."/>
            <person name="Enju A."/>
            <person name="Goldsmith A.D."/>
            <person name="Gurjal M."/>
            <person name="Hansen N.F."/>
            <person name="Hayashizaki Y."/>
            <person name="Johnson-Hopson C."/>
            <person name="Hsuan V.W."/>
            <person name="Iida K."/>
            <person name="Karnes M."/>
            <person name="Khan S."/>
            <person name="Koesema E."/>
            <person name="Ishida J."/>
            <person name="Jiang P.X."/>
            <person name="Jones T."/>
            <person name="Kawai J."/>
            <person name="Kamiya A."/>
            <person name="Meyers C."/>
            <person name="Nakajima M."/>
            <person name="Narusaka M."/>
            <person name="Seki M."/>
            <person name="Sakurai T."/>
            <person name="Satou M."/>
            <person name="Tamse R."/>
            <person name="Vaysberg M."/>
            <person name="Wallender E.K."/>
            <person name="Wong C."/>
            <person name="Yamamura Y."/>
            <person name="Yuan S."/>
            <person name="Shinozaki K."/>
            <person name="Davis R.W."/>
            <person name="Theologis A."/>
            <person name="Ecker J.R."/>
        </authorList>
    </citation>
    <scope>NUCLEOTIDE SEQUENCE [LARGE SCALE MRNA]</scope>
    <source>
        <strain>cv. Columbia</strain>
    </source>
</reference>
<reference key="4">
    <citation type="submission" date="2002-03" db="EMBL/GenBank/DDBJ databases">
        <title>Full-length cDNA from Arabidopsis thaliana.</title>
        <authorList>
            <person name="Brover V.V."/>
            <person name="Troukhan M.E."/>
            <person name="Alexandrov N.A."/>
            <person name="Lu Y.-P."/>
            <person name="Flavell R.B."/>
            <person name="Feldmann K.A."/>
        </authorList>
    </citation>
    <scope>NUCLEOTIDE SEQUENCE [LARGE SCALE MRNA]</scope>
</reference>
<reference key="5">
    <citation type="journal article" date="2020" name="Plant Cell">
        <title>A kinase and a glycosylase catabolize pseudouridine in the peroxisome to prevent toxic pseudouridine monophosphate accumulation.</title>
        <authorList>
            <person name="Chen M."/>
            <person name="Witte C.P."/>
        </authorList>
    </citation>
    <scope>FUNCTION</scope>
    <scope>CATALYTIC ACTIVITY</scope>
    <scope>BIOPHYSICOCHEMICAL PROPERTIES</scope>
    <scope>SUBCELLULAR LOCATION</scope>
</reference>
<reference key="6">
    <citation type="journal article" date="2021" name="Nucleic Acids Res.">
        <title>Structural basis for the substrate specificity and catalytic features of pseudouridine kinase from Arabidopsis thaliana.</title>
        <authorList>
            <person name="Kim S.H."/>
            <person name="Witte C.P."/>
            <person name="Rhee S."/>
        </authorList>
    </citation>
    <scope>X-RAY CRYSTALLOGRAPHY (2.08 ANGSTROMS) IN COMPLEX WITH PSEUDOURIDINE; ATP AND MAGNESIUM IONS</scope>
    <scope>CATALYTIC ACTIVITY</scope>
    <scope>BIOPHYSICOCHEMICAL PROPERTIES</scope>
    <scope>SUBUNIT</scope>
    <scope>MUTAGENESIS OF ILE-10; ASP-12; THR-26; ASN-137; GLU-160; LYS-166; THR-298; VAL-303; LEU-306; ASP-311 AND VAL-342</scope>
</reference>
<protein>
    <recommendedName>
        <fullName evidence="3">Pseudouridine kinase</fullName>
        <ecNumber evidence="1 2">2.7.1.83</ecNumber>
    </recommendedName>
</protein>
<gene>
    <name evidence="3" type="primary">PUKI</name>
    <name evidence="5" type="ordered locus">At1g49350</name>
    <name evidence="6" type="ORF">F13F21.22</name>
</gene>